<evidence type="ECO:0000250" key="1">
    <source>
        <dbReference type="UniProtKB" id="P10902"/>
    </source>
</evidence>
<evidence type="ECO:0000305" key="2"/>
<evidence type="ECO:0007829" key="3">
    <source>
        <dbReference type="PDB" id="5KXJ"/>
    </source>
</evidence>
<protein>
    <recommendedName>
        <fullName evidence="1">L-aspartate oxidase</fullName>
        <shortName evidence="1">LASPO</shortName>
        <ecNumber evidence="1">1.4.3.16</ecNumber>
    </recommendedName>
    <alternativeName>
        <fullName>Quinolinate synthase B</fullName>
    </alternativeName>
</protein>
<organism>
    <name type="scientific">Salmonella typhimurium (strain LT2 / SGSC1412 / ATCC 700720)</name>
    <dbReference type="NCBI Taxonomy" id="99287"/>
    <lineage>
        <taxon>Bacteria</taxon>
        <taxon>Pseudomonadati</taxon>
        <taxon>Pseudomonadota</taxon>
        <taxon>Gammaproteobacteria</taxon>
        <taxon>Enterobacterales</taxon>
        <taxon>Enterobacteriaceae</taxon>
        <taxon>Salmonella</taxon>
    </lineage>
</organism>
<sequence>MMTTPELSCDVLIIGSGAAGLSLALRLAEKHKVIVLSKGPVSEGSTFYAQGGIAAVFDETDSIASHVEDTLIAGAGICDRHAVEFVASNARTCVQWLIDQGVLFDTHVQPNGKESYHLTREGGHSHRRILHAADATGKEVETTLVSRAQNHPNIQVLERSNAVDLIISDKMGLPGPRRVVGAWIWNRNKEWVETCHAKSVVLATGGASKVYQYTTNPDISSGDGIAMAWRAGCRVANLEFNQFHPTALYHPQARNFLLTEALRGEGAYLKRPDGSRFMPDVDERGELAPRDIVARAIDHEMKQLGADCMFLDISHKPDDFVRQHFPMIYAKLLDLGMDLTKEPIPVVPAAHYTCGGVVVDDYGRTDVDGLYAIGEVSYTGLHGANRMASNSLLECLVYGWSAAMDIDRRMPSVHSVDALPAWDESRVENADERVVIQHNWHELRLLMWDYVGIVRTTKRLERALRRITMLQQEIDEYYANFRVSNNLLELRNLVQVAELIVRCAMMRKESRGLHFTLDYPQQLAESGPSILSPLTPHINR</sequence>
<comment type="function">
    <text evidence="1">Catalyzes the oxidation of L-aspartate to iminoaspartate, the first step in the de novo biosynthesis of NAD(+).</text>
</comment>
<comment type="catalytic activity">
    <reaction evidence="1">
        <text>L-aspartate + O2 = iminosuccinate + H2O2</text>
        <dbReference type="Rhea" id="RHEA:25876"/>
        <dbReference type="ChEBI" id="CHEBI:15379"/>
        <dbReference type="ChEBI" id="CHEBI:16240"/>
        <dbReference type="ChEBI" id="CHEBI:29991"/>
        <dbReference type="ChEBI" id="CHEBI:77875"/>
        <dbReference type="EC" id="1.4.3.16"/>
    </reaction>
    <physiologicalReaction direction="left-to-right" evidence="1">
        <dbReference type="Rhea" id="RHEA:25877"/>
    </physiologicalReaction>
</comment>
<comment type="cofactor">
    <cofactor evidence="1">
        <name>FAD</name>
        <dbReference type="ChEBI" id="CHEBI:57692"/>
    </cofactor>
    <text evidence="1">Binds 1 FAD per subunit.</text>
</comment>
<comment type="pathway">
    <text evidence="1">Cofactor biosynthesis; NAD(+) biosynthesis; iminoaspartate from L-aspartate (oxidase route): step 1/1.</text>
</comment>
<comment type="subcellular location">
    <subcellularLocation>
        <location evidence="1">Cytoplasm</location>
    </subcellularLocation>
</comment>
<comment type="similarity">
    <text evidence="2">Belongs to the FAD-dependent oxidoreductase 2 family. NadB subfamily.</text>
</comment>
<proteinExistence type="evidence at protein level"/>
<dbReference type="EC" id="1.4.3.16" evidence="1"/>
<dbReference type="EMBL" id="AE006468">
    <property type="protein sequence ID" value="AAL21535.1"/>
    <property type="molecule type" value="Genomic_DNA"/>
</dbReference>
<dbReference type="RefSeq" id="NP_461576.1">
    <property type="nucleotide sequence ID" value="NC_003197.2"/>
</dbReference>
<dbReference type="RefSeq" id="WP_000989177.1">
    <property type="nucleotide sequence ID" value="NC_003197.2"/>
</dbReference>
<dbReference type="PDB" id="5KXJ">
    <property type="method" value="X-ray"/>
    <property type="resolution" value="1.87 A"/>
    <property type="chains" value="A=1-540"/>
</dbReference>
<dbReference type="PDBsum" id="5KXJ"/>
<dbReference type="SMR" id="Q8ZMX9"/>
<dbReference type="STRING" id="99287.STM2641"/>
<dbReference type="PaxDb" id="99287-STM2641"/>
<dbReference type="GeneID" id="1254164"/>
<dbReference type="KEGG" id="stm:STM2641"/>
<dbReference type="PATRIC" id="fig|99287.12.peg.2791"/>
<dbReference type="HOGENOM" id="CLU_014312_3_0_6"/>
<dbReference type="OMA" id="HCVQWLI"/>
<dbReference type="PhylomeDB" id="Q8ZMX9"/>
<dbReference type="BioCyc" id="SENT99287:STM2641-MONOMER"/>
<dbReference type="UniPathway" id="UPA00253">
    <property type="reaction ID" value="UER00326"/>
</dbReference>
<dbReference type="Proteomes" id="UP000001014">
    <property type="component" value="Chromosome"/>
</dbReference>
<dbReference type="GO" id="GO:0005737">
    <property type="term" value="C:cytoplasm"/>
    <property type="evidence" value="ECO:0007669"/>
    <property type="project" value="UniProtKB-SubCell"/>
</dbReference>
<dbReference type="GO" id="GO:0008734">
    <property type="term" value="F:L-aspartate oxidase activity"/>
    <property type="evidence" value="ECO:0000318"/>
    <property type="project" value="GO_Central"/>
</dbReference>
<dbReference type="GO" id="GO:0000166">
    <property type="term" value="F:nucleotide binding"/>
    <property type="evidence" value="ECO:0007669"/>
    <property type="project" value="UniProtKB-KW"/>
</dbReference>
<dbReference type="GO" id="GO:0034628">
    <property type="term" value="P:'de novo' NAD biosynthetic process from L-aspartate"/>
    <property type="evidence" value="ECO:0000318"/>
    <property type="project" value="GO_Central"/>
</dbReference>
<dbReference type="FunFam" id="1.20.58.100:FF:000002">
    <property type="entry name" value="L-aspartate oxidase"/>
    <property type="match status" value="1"/>
</dbReference>
<dbReference type="FunFam" id="3.50.50.60:FF:000060">
    <property type="entry name" value="L-aspartate oxidase"/>
    <property type="match status" value="1"/>
</dbReference>
<dbReference type="FunFam" id="3.90.700.10:FF:000002">
    <property type="entry name" value="L-aspartate oxidase"/>
    <property type="match status" value="1"/>
</dbReference>
<dbReference type="Gene3D" id="3.50.50.60">
    <property type="entry name" value="FAD/NAD(P)-binding domain"/>
    <property type="match status" value="1"/>
</dbReference>
<dbReference type="Gene3D" id="1.20.58.100">
    <property type="entry name" value="Fumarate reductase/succinate dehydrogenase flavoprotein-like, C-terminal domain"/>
    <property type="match status" value="1"/>
</dbReference>
<dbReference type="Gene3D" id="3.90.700.10">
    <property type="entry name" value="Succinate dehydrogenase/fumarate reductase flavoprotein, catalytic domain"/>
    <property type="match status" value="1"/>
</dbReference>
<dbReference type="InterPro" id="IPR003953">
    <property type="entry name" value="FAD-dep_OxRdtase_2_FAD-bd"/>
</dbReference>
<dbReference type="InterPro" id="IPR036188">
    <property type="entry name" value="FAD/NAD-bd_sf"/>
</dbReference>
<dbReference type="InterPro" id="IPR037099">
    <property type="entry name" value="Fum_R/Succ_DH_flav-like_C_sf"/>
</dbReference>
<dbReference type="InterPro" id="IPR015939">
    <property type="entry name" value="Fum_Rdtase/Succ_DH_flav-like_C"/>
</dbReference>
<dbReference type="InterPro" id="IPR005288">
    <property type="entry name" value="NadB"/>
</dbReference>
<dbReference type="InterPro" id="IPR027477">
    <property type="entry name" value="Succ_DH/fumarate_Rdtase_cat_sf"/>
</dbReference>
<dbReference type="NCBIfam" id="TIGR00551">
    <property type="entry name" value="nadB"/>
    <property type="match status" value="1"/>
</dbReference>
<dbReference type="NCBIfam" id="NF006567">
    <property type="entry name" value="PRK09077.1"/>
    <property type="match status" value="1"/>
</dbReference>
<dbReference type="PANTHER" id="PTHR42716">
    <property type="entry name" value="L-ASPARTATE OXIDASE"/>
    <property type="match status" value="1"/>
</dbReference>
<dbReference type="PANTHER" id="PTHR42716:SF2">
    <property type="entry name" value="L-ASPARTATE OXIDASE, CHLOROPLASTIC"/>
    <property type="match status" value="1"/>
</dbReference>
<dbReference type="Pfam" id="PF00890">
    <property type="entry name" value="FAD_binding_2"/>
    <property type="match status" value="1"/>
</dbReference>
<dbReference type="Pfam" id="PF02910">
    <property type="entry name" value="Succ_DH_flav_C"/>
    <property type="match status" value="1"/>
</dbReference>
<dbReference type="PIRSF" id="PIRSF000171">
    <property type="entry name" value="SDHA_APRA_LASPO"/>
    <property type="match status" value="1"/>
</dbReference>
<dbReference type="PRINTS" id="PR00368">
    <property type="entry name" value="FADPNR"/>
</dbReference>
<dbReference type="PRINTS" id="PR00411">
    <property type="entry name" value="PNDRDTASEI"/>
</dbReference>
<dbReference type="SUPFAM" id="SSF51905">
    <property type="entry name" value="FAD/NAD(P)-binding domain"/>
    <property type="match status" value="1"/>
</dbReference>
<dbReference type="SUPFAM" id="SSF46977">
    <property type="entry name" value="Succinate dehydrogenase/fumarate reductase flavoprotein C-terminal domain"/>
    <property type="match status" value="1"/>
</dbReference>
<dbReference type="SUPFAM" id="SSF56425">
    <property type="entry name" value="Succinate dehydrogenase/fumarate reductase flavoprotein, catalytic domain"/>
    <property type="match status" value="1"/>
</dbReference>
<reference key="1">
    <citation type="journal article" date="2001" name="Nature">
        <title>Complete genome sequence of Salmonella enterica serovar Typhimurium LT2.</title>
        <authorList>
            <person name="McClelland M."/>
            <person name="Sanderson K.E."/>
            <person name="Spieth J."/>
            <person name="Clifton S.W."/>
            <person name="Latreille P."/>
            <person name="Courtney L."/>
            <person name="Porwollik S."/>
            <person name="Ali J."/>
            <person name="Dante M."/>
            <person name="Du F."/>
            <person name="Hou S."/>
            <person name="Layman D."/>
            <person name="Leonard S."/>
            <person name="Nguyen C."/>
            <person name="Scott K."/>
            <person name="Holmes A."/>
            <person name="Grewal N."/>
            <person name="Mulvaney E."/>
            <person name="Ryan E."/>
            <person name="Sun H."/>
            <person name="Florea L."/>
            <person name="Miller W."/>
            <person name="Stoneking T."/>
            <person name="Nhan M."/>
            <person name="Waterston R."/>
            <person name="Wilson R.K."/>
        </authorList>
    </citation>
    <scope>NUCLEOTIDE SEQUENCE [LARGE SCALE GENOMIC DNA]</scope>
    <source>
        <strain>LT2 / SGSC1412 / ATCC 700720</strain>
    </source>
</reference>
<keyword id="KW-0002">3D-structure</keyword>
<keyword id="KW-0963">Cytoplasm</keyword>
<keyword id="KW-0274">FAD</keyword>
<keyword id="KW-0285">Flavoprotein</keyword>
<keyword id="KW-0547">Nucleotide-binding</keyword>
<keyword id="KW-0560">Oxidoreductase</keyword>
<keyword id="KW-0662">Pyridine nucleotide biosynthesis</keyword>
<keyword id="KW-1185">Reference proteome</keyword>
<gene>
    <name type="primary">nadB</name>
    <name type="ordered locus">STM2641</name>
</gene>
<feature type="chain" id="PRO_0000184400" description="L-aspartate oxidase">
    <location>
        <begin position="1"/>
        <end position="540"/>
    </location>
</feature>
<feature type="active site" description="Proton donor/acceptor" evidence="1">
    <location>
        <position position="290"/>
    </location>
</feature>
<feature type="binding site" evidence="1">
    <location>
        <begin position="16"/>
        <end position="19"/>
    </location>
    <ligand>
        <name>FAD</name>
        <dbReference type="ChEBI" id="CHEBI:57692"/>
    </ligand>
</feature>
<feature type="binding site" evidence="1">
    <location>
        <position position="38"/>
    </location>
    <ligand>
        <name>FAD</name>
        <dbReference type="ChEBI" id="CHEBI:57692"/>
    </ligand>
</feature>
<feature type="binding site" evidence="1">
    <location>
        <begin position="45"/>
        <end position="52"/>
    </location>
    <ligand>
        <name>FAD</name>
        <dbReference type="ChEBI" id="CHEBI:57692"/>
    </ligand>
</feature>
<feature type="binding site" evidence="1">
    <location>
        <position position="223"/>
    </location>
    <ligand>
        <name>FAD</name>
        <dbReference type="ChEBI" id="CHEBI:57692"/>
    </ligand>
</feature>
<feature type="binding site" evidence="1">
    <location>
        <position position="375"/>
    </location>
    <ligand>
        <name>FAD</name>
        <dbReference type="ChEBI" id="CHEBI:57692"/>
    </ligand>
</feature>
<feature type="binding site" evidence="1">
    <location>
        <begin position="391"/>
        <end position="392"/>
    </location>
    <ligand>
        <name>FAD</name>
        <dbReference type="ChEBI" id="CHEBI:57692"/>
    </ligand>
</feature>
<feature type="site" description="Important in orienting the L-aspartate substrate" evidence="1">
    <location>
        <position position="121"/>
    </location>
</feature>
<feature type="strand" evidence="3">
    <location>
        <begin position="6"/>
        <end position="14"/>
    </location>
</feature>
<feature type="helix" evidence="3">
    <location>
        <begin position="18"/>
        <end position="28"/>
    </location>
</feature>
<feature type="strand" evidence="3">
    <location>
        <begin position="33"/>
        <end position="36"/>
    </location>
</feature>
<feature type="helix" evidence="3">
    <location>
        <begin position="63"/>
        <end position="73"/>
    </location>
</feature>
<feature type="turn" evidence="3">
    <location>
        <begin position="74"/>
        <end position="76"/>
    </location>
</feature>
<feature type="helix" evidence="3">
    <location>
        <begin position="80"/>
        <end position="99"/>
    </location>
</feature>
<feature type="helix" evidence="3">
    <location>
        <begin position="139"/>
        <end position="148"/>
    </location>
</feature>
<feature type="strand" evidence="3">
    <location>
        <begin position="154"/>
        <end position="157"/>
    </location>
</feature>
<feature type="strand" evidence="3">
    <location>
        <begin position="159"/>
        <end position="167"/>
    </location>
</feature>
<feature type="helix" evidence="3">
    <location>
        <begin position="168"/>
        <end position="171"/>
    </location>
</feature>
<feature type="strand" evidence="3">
    <location>
        <begin position="178"/>
        <end position="186"/>
    </location>
</feature>
<feature type="turn" evidence="3">
    <location>
        <begin position="187"/>
        <end position="190"/>
    </location>
</feature>
<feature type="strand" evidence="3">
    <location>
        <begin position="191"/>
        <end position="202"/>
    </location>
</feature>
<feature type="helix" evidence="3">
    <location>
        <begin position="208"/>
        <end position="210"/>
    </location>
</feature>
<feature type="strand" evidence="3">
    <location>
        <begin position="211"/>
        <end position="215"/>
    </location>
</feature>
<feature type="helix" evidence="3">
    <location>
        <begin position="217"/>
        <end position="219"/>
    </location>
</feature>
<feature type="helix" evidence="3">
    <location>
        <begin position="223"/>
        <end position="231"/>
    </location>
</feature>
<feature type="strand" evidence="3">
    <location>
        <begin position="241"/>
        <end position="248"/>
    </location>
</feature>
<feature type="helix" evidence="3">
    <location>
        <begin position="261"/>
        <end position="264"/>
    </location>
</feature>
<feature type="strand" evidence="3">
    <location>
        <begin position="268"/>
        <end position="270"/>
    </location>
</feature>
<feature type="helix" evidence="3">
    <location>
        <begin position="278"/>
        <end position="281"/>
    </location>
</feature>
<feature type="helix" evidence="3">
    <location>
        <begin position="285"/>
        <end position="287"/>
    </location>
</feature>
<feature type="helix" evidence="3">
    <location>
        <begin position="290"/>
        <end position="304"/>
    </location>
</feature>
<feature type="strand" evidence="3">
    <location>
        <begin position="309"/>
        <end position="312"/>
    </location>
</feature>
<feature type="helix" evidence="3">
    <location>
        <begin position="318"/>
        <end position="324"/>
    </location>
</feature>
<feature type="helix" evidence="3">
    <location>
        <begin position="326"/>
        <end position="334"/>
    </location>
</feature>
<feature type="turn" evidence="3">
    <location>
        <begin position="339"/>
        <end position="341"/>
    </location>
</feature>
<feature type="strand" evidence="3">
    <location>
        <begin position="344"/>
        <end position="354"/>
    </location>
</feature>
<feature type="strand" evidence="3">
    <location>
        <begin position="356"/>
        <end position="358"/>
    </location>
</feature>
<feature type="strand" evidence="3">
    <location>
        <begin position="366"/>
        <end position="368"/>
    </location>
</feature>
<feature type="strand" evidence="3">
    <location>
        <begin position="370"/>
        <end position="372"/>
    </location>
</feature>
<feature type="helix" evidence="3">
    <location>
        <begin position="374"/>
        <end position="376"/>
    </location>
</feature>
<feature type="strand" evidence="3">
    <location>
        <begin position="380"/>
        <end position="382"/>
    </location>
</feature>
<feature type="helix" evidence="3">
    <location>
        <begin position="390"/>
        <end position="409"/>
    </location>
</feature>
<feature type="helix" evidence="3">
    <location>
        <begin position="410"/>
        <end position="412"/>
    </location>
</feature>
<feature type="helix" evidence="3">
    <location>
        <begin position="430"/>
        <end position="450"/>
    </location>
</feature>
<feature type="strand" evidence="3">
    <location>
        <begin position="451"/>
        <end position="455"/>
    </location>
</feature>
<feature type="helix" evidence="3">
    <location>
        <begin position="457"/>
        <end position="477"/>
    </location>
</feature>
<feature type="helix" evidence="3">
    <location>
        <begin position="485"/>
        <end position="506"/>
    </location>
</feature>
<accession>Q8ZMX9</accession>
<name>NADB_SALTY</name>